<accession>Q8SQ09</accession>
<accession>Q1KHR0</accession>
<organism>
    <name type="scientific">Papio hamadryas</name>
    <name type="common">Hamadryas baboon</name>
    <dbReference type="NCBI Taxonomy" id="9557"/>
    <lineage>
        <taxon>Eukaryota</taxon>
        <taxon>Metazoa</taxon>
        <taxon>Chordata</taxon>
        <taxon>Craniata</taxon>
        <taxon>Vertebrata</taxon>
        <taxon>Euteleostomi</taxon>
        <taxon>Mammalia</taxon>
        <taxon>Eutheria</taxon>
        <taxon>Euarchontoglires</taxon>
        <taxon>Primates</taxon>
        <taxon>Haplorrhini</taxon>
        <taxon>Catarrhini</taxon>
        <taxon>Cercopithecidae</taxon>
        <taxon>Cercopithecinae</taxon>
        <taxon>Papio</taxon>
    </lineage>
</organism>
<sequence length="152" mass="17075">MALDKSVILLPLLVLVLLVLGCLGRESRAKKFQRQHMDSGSSPSSNSTYCNQMMKRRSMTHGRCKPVNTFVHEPLVDVQNVCFQEKVTCKNGQTNCFKSKSSMHITDCRLTNGSRYPNCAYRTSPKERRIIVACEGSPYVPVHFDASVEDST</sequence>
<reference key="1">
    <citation type="journal article" date="2002" name="Nat. Genet.">
        <title>Adaptive evolution of a duplicated pancreatic ribonuclease gene in a leaf-eating monkey.</title>
        <authorList>
            <person name="Zhang J."/>
            <person name="Zhang Y.-P."/>
            <person name="Rosenberg H.F."/>
        </authorList>
    </citation>
    <scope>NUCLEOTIDE SEQUENCE [GENOMIC DNA]</scope>
</reference>
<reference key="2">
    <citation type="journal article" date="2006" name="Mol. Biol. Evol.">
        <title>Duplication and divergence of two distinct pancreatic ribonuclease genes in leaf-eating African and Asian colobine monkeys.</title>
        <authorList>
            <person name="Schienman J.E."/>
            <person name="Holt R.A."/>
            <person name="Auerbach M.R."/>
            <person name="Stewart C.B."/>
        </authorList>
    </citation>
    <scope>NUCLEOTIDE SEQUENCE [GENOMIC DNA]</scope>
</reference>
<feature type="signal peptide" evidence="1">
    <location>
        <begin position="1"/>
        <end position="24"/>
    </location>
</feature>
<feature type="chain" id="PRO_0000030935" description="Ribonuclease pancreatic">
    <location>
        <begin position="25"/>
        <end position="152"/>
    </location>
</feature>
<feature type="active site" description="Proton acceptor" evidence="1">
    <location>
        <position position="36"/>
    </location>
</feature>
<feature type="active site" description="Proton donor" evidence="1">
    <location>
        <position position="143"/>
    </location>
</feature>
<feature type="binding site" evidence="1">
    <location>
        <position position="31"/>
    </location>
    <ligand>
        <name>substrate</name>
    </ligand>
</feature>
<feature type="binding site" evidence="1">
    <location>
        <position position="34"/>
    </location>
    <ligand>
        <name>substrate</name>
    </ligand>
</feature>
<feature type="binding site" evidence="1">
    <location>
        <begin position="65"/>
        <end position="69"/>
    </location>
    <ligand>
        <name>substrate</name>
    </ligand>
</feature>
<feature type="binding site" evidence="1">
    <location>
        <position position="90"/>
    </location>
    <ligand>
        <name>substrate</name>
    </ligand>
</feature>
<feature type="binding site" evidence="1">
    <location>
        <position position="109"/>
    </location>
    <ligand>
        <name>substrate</name>
    </ligand>
</feature>
<feature type="glycosylation site" description="N-linked (GlcNAc...) asparagine" evidence="2">
    <location>
        <position position="46"/>
    </location>
</feature>
<feature type="glycosylation site" description="N-linked (GlcNAc...) asparagine" evidence="2">
    <location>
        <position position="112"/>
    </location>
</feature>
<feature type="disulfide bond" evidence="1">
    <location>
        <begin position="50"/>
        <end position="108"/>
    </location>
</feature>
<feature type="disulfide bond" evidence="1">
    <location>
        <begin position="64"/>
        <end position="119"/>
    </location>
</feature>
<feature type="disulfide bond" evidence="1">
    <location>
        <begin position="82"/>
        <end position="134"/>
    </location>
</feature>
<feature type="disulfide bond" evidence="1">
    <location>
        <begin position="89"/>
        <end position="96"/>
    </location>
</feature>
<keyword id="KW-1015">Disulfide bond</keyword>
<keyword id="KW-0255">Endonuclease</keyword>
<keyword id="KW-0325">Glycoprotein</keyword>
<keyword id="KW-0378">Hydrolase</keyword>
<keyword id="KW-0456">Lyase</keyword>
<keyword id="KW-0540">Nuclease</keyword>
<keyword id="KW-0964">Secreted</keyword>
<keyword id="KW-0732">Signal</keyword>
<name>RNAS1_PAPHA</name>
<protein>
    <recommendedName>
        <fullName>Ribonuclease pancreatic</fullName>
        <ecNumber>4.6.1.18</ecNumber>
    </recommendedName>
    <alternativeName>
        <fullName>RNase 1</fullName>
    </alternativeName>
    <alternativeName>
        <fullName>RNase A</fullName>
    </alternativeName>
</protein>
<dbReference type="EC" id="4.6.1.18"/>
<dbReference type="EMBL" id="AF449634">
    <property type="protein sequence ID" value="AAL87055.1"/>
    <property type="molecule type" value="Genomic_DNA"/>
</dbReference>
<dbReference type="EMBL" id="DQ494869">
    <property type="protein sequence ID" value="ABF00146.1"/>
    <property type="molecule type" value="Genomic_DNA"/>
</dbReference>
<dbReference type="SMR" id="Q8SQ09"/>
<dbReference type="GlyCosmos" id="Q8SQ09">
    <property type="glycosylation" value="2 sites, No reported glycans"/>
</dbReference>
<dbReference type="GO" id="GO:0005576">
    <property type="term" value="C:extracellular region"/>
    <property type="evidence" value="ECO:0007669"/>
    <property type="project" value="UniProtKB-SubCell"/>
</dbReference>
<dbReference type="GO" id="GO:0016829">
    <property type="term" value="F:lyase activity"/>
    <property type="evidence" value="ECO:0007669"/>
    <property type="project" value="UniProtKB-KW"/>
</dbReference>
<dbReference type="GO" id="GO:0003676">
    <property type="term" value="F:nucleic acid binding"/>
    <property type="evidence" value="ECO:0007669"/>
    <property type="project" value="InterPro"/>
</dbReference>
<dbReference type="GO" id="GO:0004522">
    <property type="term" value="F:ribonuclease A activity"/>
    <property type="evidence" value="ECO:0007669"/>
    <property type="project" value="UniProtKB-EC"/>
</dbReference>
<dbReference type="GO" id="GO:0050830">
    <property type="term" value="P:defense response to Gram-positive bacterium"/>
    <property type="evidence" value="ECO:0007669"/>
    <property type="project" value="TreeGrafter"/>
</dbReference>
<dbReference type="CDD" id="cd06265">
    <property type="entry name" value="RNase_A_canonical"/>
    <property type="match status" value="1"/>
</dbReference>
<dbReference type="FunFam" id="3.10.130.10:FF:000001">
    <property type="entry name" value="Ribonuclease pancreatic"/>
    <property type="match status" value="1"/>
</dbReference>
<dbReference type="Gene3D" id="3.10.130.10">
    <property type="entry name" value="Ribonuclease A-like domain"/>
    <property type="match status" value="1"/>
</dbReference>
<dbReference type="InterPro" id="IPR001427">
    <property type="entry name" value="RNaseA"/>
</dbReference>
<dbReference type="InterPro" id="IPR036816">
    <property type="entry name" value="RNaseA-like_dom_sf"/>
</dbReference>
<dbReference type="InterPro" id="IPR023411">
    <property type="entry name" value="RNaseA_AS"/>
</dbReference>
<dbReference type="InterPro" id="IPR023412">
    <property type="entry name" value="RNaseA_domain"/>
</dbReference>
<dbReference type="PANTHER" id="PTHR11437">
    <property type="entry name" value="RIBONUCLEASE"/>
    <property type="match status" value="1"/>
</dbReference>
<dbReference type="PANTHER" id="PTHR11437:SF24">
    <property type="entry name" value="RIBONUCLEASE PANCREATIC"/>
    <property type="match status" value="1"/>
</dbReference>
<dbReference type="Pfam" id="PF00074">
    <property type="entry name" value="RnaseA"/>
    <property type="match status" value="1"/>
</dbReference>
<dbReference type="PRINTS" id="PR00794">
    <property type="entry name" value="RIBONUCLEASE"/>
</dbReference>
<dbReference type="SMART" id="SM00092">
    <property type="entry name" value="RNAse_Pc"/>
    <property type="match status" value="1"/>
</dbReference>
<dbReference type="SUPFAM" id="SSF54076">
    <property type="entry name" value="RNase A-like"/>
    <property type="match status" value="1"/>
</dbReference>
<dbReference type="PROSITE" id="PS00127">
    <property type="entry name" value="RNASE_PANCREATIC"/>
    <property type="match status" value="1"/>
</dbReference>
<comment type="function">
    <text evidence="1">Endonuclease that catalyzes the cleavage of RNA on the 3' side of pyrimidine nucleotides. Acts on single-stranded and double-stranded RNA (By similarity).</text>
</comment>
<comment type="catalytic activity">
    <reaction>
        <text>an [RNA] containing cytidine + H2O = an [RNA]-3'-cytidine-3'-phosphate + a 5'-hydroxy-ribonucleotide-3'-[RNA].</text>
        <dbReference type="EC" id="4.6.1.18"/>
    </reaction>
</comment>
<comment type="catalytic activity">
    <reaction>
        <text>an [RNA] containing uridine + H2O = an [RNA]-3'-uridine-3'-phosphate + a 5'-hydroxy-ribonucleotide-3'-[RNA].</text>
        <dbReference type="EC" id="4.6.1.18"/>
    </reaction>
</comment>
<comment type="subunit">
    <text evidence="1">Monomer. Interacts with and forms tight 1:1 complexes with RNH1. Dimerization of two such complexes may occur. Interaction with RNH1 inhibits this protein (By similarity).</text>
</comment>
<comment type="subcellular location">
    <subcellularLocation>
        <location>Secreted</location>
    </subcellularLocation>
</comment>
<comment type="similarity">
    <text evidence="3">Belongs to the pancreatic ribonuclease family.</text>
</comment>
<evidence type="ECO:0000250" key="1"/>
<evidence type="ECO:0000255" key="2"/>
<evidence type="ECO:0000305" key="3"/>
<gene>
    <name type="primary">RNASE1</name>
    <name type="synonym">RNS1</name>
</gene>
<proteinExistence type="inferred from homology"/>